<dbReference type="EMBL" id="CP000023">
    <property type="protein sequence ID" value="AAV60287.1"/>
    <property type="molecule type" value="Genomic_DNA"/>
</dbReference>
<dbReference type="RefSeq" id="WP_002950151.1">
    <property type="nucleotide sequence ID" value="NC_006448.1"/>
</dbReference>
<dbReference type="SMR" id="Q5M5B0"/>
<dbReference type="STRING" id="264199.stu0581"/>
<dbReference type="GeneID" id="66898485"/>
<dbReference type="KEGG" id="stl:stu0581"/>
<dbReference type="eggNOG" id="COG1219">
    <property type="taxonomic scope" value="Bacteria"/>
</dbReference>
<dbReference type="HOGENOM" id="CLU_014218_8_2_9"/>
<dbReference type="Proteomes" id="UP000001170">
    <property type="component" value="Chromosome"/>
</dbReference>
<dbReference type="GO" id="GO:0009376">
    <property type="term" value="C:HslUV protease complex"/>
    <property type="evidence" value="ECO:0007669"/>
    <property type="project" value="TreeGrafter"/>
</dbReference>
<dbReference type="GO" id="GO:0005524">
    <property type="term" value="F:ATP binding"/>
    <property type="evidence" value="ECO:0007669"/>
    <property type="project" value="UniProtKB-UniRule"/>
</dbReference>
<dbReference type="GO" id="GO:0016887">
    <property type="term" value="F:ATP hydrolysis activity"/>
    <property type="evidence" value="ECO:0007669"/>
    <property type="project" value="InterPro"/>
</dbReference>
<dbReference type="GO" id="GO:0140662">
    <property type="term" value="F:ATP-dependent protein folding chaperone"/>
    <property type="evidence" value="ECO:0007669"/>
    <property type="project" value="InterPro"/>
</dbReference>
<dbReference type="GO" id="GO:0046983">
    <property type="term" value="F:protein dimerization activity"/>
    <property type="evidence" value="ECO:0007669"/>
    <property type="project" value="InterPro"/>
</dbReference>
<dbReference type="GO" id="GO:0051082">
    <property type="term" value="F:unfolded protein binding"/>
    <property type="evidence" value="ECO:0007669"/>
    <property type="project" value="UniProtKB-UniRule"/>
</dbReference>
<dbReference type="GO" id="GO:0008270">
    <property type="term" value="F:zinc ion binding"/>
    <property type="evidence" value="ECO:0007669"/>
    <property type="project" value="InterPro"/>
</dbReference>
<dbReference type="GO" id="GO:0051301">
    <property type="term" value="P:cell division"/>
    <property type="evidence" value="ECO:0007669"/>
    <property type="project" value="TreeGrafter"/>
</dbReference>
<dbReference type="GO" id="GO:0051603">
    <property type="term" value="P:proteolysis involved in protein catabolic process"/>
    <property type="evidence" value="ECO:0007669"/>
    <property type="project" value="TreeGrafter"/>
</dbReference>
<dbReference type="CDD" id="cd19497">
    <property type="entry name" value="RecA-like_ClpX"/>
    <property type="match status" value="1"/>
</dbReference>
<dbReference type="FunFam" id="1.10.8.60:FF:000002">
    <property type="entry name" value="ATP-dependent Clp protease ATP-binding subunit ClpX"/>
    <property type="match status" value="1"/>
</dbReference>
<dbReference type="FunFam" id="3.40.50.300:FF:000005">
    <property type="entry name" value="ATP-dependent Clp protease ATP-binding subunit ClpX"/>
    <property type="match status" value="1"/>
</dbReference>
<dbReference type="Gene3D" id="1.10.8.60">
    <property type="match status" value="1"/>
</dbReference>
<dbReference type="Gene3D" id="6.20.220.10">
    <property type="entry name" value="ClpX chaperone, C4-type zinc finger domain"/>
    <property type="match status" value="1"/>
</dbReference>
<dbReference type="Gene3D" id="3.40.50.300">
    <property type="entry name" value="P-loop containing nucleotide triphosphate hydrolases"/>
    <property type="match status" value="1"/>
</dbReference>
<dbReference type="HAMAP" id="MF_00175">
    <property type="entry name" value="ClpX"/>
    <property type="match status" value="1"/>
</dbReference>
<dbReference type="InterPro" id="IPR003593">
    <property type="entry name" value="AAA+_ATPase"/>
</dbReference>
<dbReference type="InterPro" id="IPR050052">
    <property type="entry name" value="ATP-dep_Clp_protease_ClpX"/>
</dbReference>
<dbReference type="InterPro" id="IPR003959">
    <property type="entry name" value="ATPase_AAA_core"/>
</dbReference>
<dbReference type="InterPro" id="IPR019489">
    <property type="entry name" value="Clp_ATPase_C"/>
</dbReference>
<dbReference type="InterPro" id="IPR004487">
    <property type="entry name" value="Clp_protease_ATP-bd_su_ClpX"/>
</dbReference>
<dbReference type="InterPro" id="IPR046425">
    <property type="entry name" value="ClpX_bact"/>
</dbReference>
<dbReference type="InterPro" id="IPR027417">
    <property type="entry name" value="P-loop_NTPase"/>
</dbReference>
<dbReference type="InterPro" id="IPR010603">
    <property type="entry name" value="Znf_CppX_C4"/>
</dbReference>
<dbReference type="InterPro" id="IPR038366">
    <property type="entry name" value="Znf_CppX_C4_sf"/>
</dbReference>
<dbReference type="NCBIfam" id="TIGR00382">
    <property type="entry name" value="clpX"/>
    <property type="match status" value="1"/>
</dbReference>
<dbReference type="NCBIfam" id="NF003745">
    <property type="entry name" value="PRK05342.1"/>
    <property type="match status" value="1"/>
</dbReference>
<dbReference type="PANTHER" id="PTHR48102:SF7">
    <property type="entry name" value="ATP-DEPENDENT CLP PROTEASE ATP-BINDING SUBUNIT CLPX-LIKE, MITOCHONDRIAL"/>
    <property type="match status" value="1"/>
</dbReference>
<dbReference type="PANTHER" id="PTHR48102">
    <property type="entry name" value="ATP-DEPENDENT CLP PROTEASE ATP-BINDING SUBUNIT CLPX-LIKE, MITOCHONDRIAL-RELATED"/>
    <property type="match status" value="1"/>
</dbReference>
<dbReference type="Pfam" id="PF07724">
    <property type="entry name" value="AAA_2"/>
    <property type="match status" value="1"/>
</dbReference>
<dbReference type="Pfam" id="PF10431">
    <property type="entry name" value="ClpB_D2-small"/>
    <property type="match status" value="1"/>
</dbReference>
<dbReference type="Pfam" id="PF06689">
    <property type="entry name" value="zf-C4_ClpX"/>
    <property type="match status" value="1"/>
</dbReference>
<dbReference type="SMART" id="SM00382">
    <property type="entry name" value="AAA"/>
    <property type="match status" value="1"/>
</dbReference>
<dbReference type="SMART" id="SM01086">
    <property type="entry name" value="ClpB_D2-small"/>
    <property type="match status" value="1"/>
</dbReference>
<dbReference type="SMART" id="SM00994">
    <property type="entry name" value="zf-C4_ClpX"/>
    <property type="match status" value="1"/>
</dbReference>
<dbReference type="SUPFAM" id="SSF57716">
    <property type="entry name" value="Glucocorticoid receptor-like (DNA-binding domain)"/>
    <property type="match status" value="1"/>
</dbReference>
<dbReference type="SUPFAM" id="SSF52540">
    <property type="entry name" value="P-loop containing nucleoside triphosphate hydrolases"/>
    <property type="match status" value="1"/>
</dbReference>
<dbReference type="PROSITE" id="PS51902">
    <property type="entry name" value="CLPX_ZB"/>
    <property type="match status" value="1"/>
</dbReference>
<accession>Q5M5B0</accession>
<gene>
    <name evidence="1" type="primary">clpX</name>
    <name type="ordered locus">stu0581</name>
</gene>
<sequence>MAGNRNEEMVYCSFCGKNQEEVKKIIAGNGVFICNECVALSQEIIREETAEEVLADLAETPKPKELLDILNNYVVGQDRVKRALAVAVYNHYKRINFTESREDNDVDLQKSNILMIGPTGSGKTYLAQTLARSLNVPFAIADATSLTEAGYVGEDVENILLKLIQAADFNIERAERGIIYVDEIDKIAKKGENVSITRDVSGEGVQQALLKIIEGTVASVPPQGGRKHPNQEMIQIDTKNILFIVGGAFDGIEDIVKQRLGEKIIGFGQNNKAIDDESSYMKEIVAEDIQKFGLIPEFIGRLPVLATLEQLTVDDLVRILTEPRNALVKQYQTLLSYDGVELEFDQDALEAIASKAIERKTGARGLRSIIEEVMMDVMFEIPSLEDVTKVRITKEAVDGKAAPVLETA</sequence>
<keyword id="KW-0067">ATP-binding</keyword>
<keyword id="KW-0143">Chaperone</keyword>
<keyword id="KW-0479">Metal-binding</keyword>
<keyword id="KW-0547">Nucleotide-binding</keyword>
<keyword id="KW-1185">Reference proteome</keyword>
<keyword id="KW-0862">Zinc</keyword>
<protein>
    <recommendedName>
        <fullName evidence="1">ATP-dependent Clp protease ATP-binding subunit ClpX</fullName>
    </recommendedName>
</protein>
<reference key="1">
    <citation type="journal article" date="2004" name="Nat. Biotechnol.">
        <title>Complete sequence and comparative genome analysis of the dairy bacterium Streptococcus thermophilus.</title>
        <authorList>
            <person name="Bolotin A."/>
            <person name="Quinquis B."/>
            <person name="Renault P."/>
            <person name="Sorokin A."/>
            <person name="Ehrlich S.D."/>
            <person name="Kulakauskas S."/>
            <person name="Lapidus A."/>
            <person name="Goltsman E."/>
            <person name="Mazur M."/>
            <person name="Pusch G.D."/>
            <person name="Fonstein M."/>
            <person name="Overbeek R."/>
            <person name="Kyprides N."/>
            <person name="Purnelle B."/>
            <person name="Prozzi D."/>
            <person name="Ngui K."/>
            <person name="Masuy D."/>
            <person name="Hancy F."/>
            <person name="Burteau S."/>
            <person name="Boutry M."/>
            <person name="Delcour J."/>
            <person name="Goffeau A."/>
            <person name="Hols P."/>
        </authorList>
    </citation>
    <scope>NUCLEOTIDE SEQUENCE [LARGE SCALE GENOMIC DNA]</scope>
    <source>
        <strain>ATCC BAA-250 / LMG 18311</strain>
    </source>
</reference>
<organism>
    <name type="scientific">Streptococcus thermophilus (strain ATCC BAA-250 / LMG 18311)</name>
    <dbReference type="NCBI Taxonomy" id="264199"/>
    <lineage>
        <taxon>Bacteria</taxon>
        <taxon>Bacillati</taxon>
        <taxon>Bacillota</taxon>
        <taxon>Bacilli</taxon>
        <taxon>Lactobacillales</taxon>
        <taxon>Streptococcaceae</taxon>
        <taxon>Streptococcus</taxon>
    </lineage>
</organism>
<name>CLPX_STRT2</name>
<proteinExistence type="inferred from homology"/>
<comment type="function">
    <text evidence="1">ATP-dependent specificity component of the Clp protease. It directs the protease to specific substrates. Can perform chaperone functions in the absence of ClpP.</text>
</comment>
<comment type="subunit">
    <text evidence="1">Component of the ClpX-ClpP complex. Forms a hexameric ring that, in the presence of ATP, binds to fourteen ClpP subunits assembled into a disk-like structure with a central cavity, resembling the structure of eukaryotic proteasomes.</text>
</comment>
<comment type="similarity">
    <text evidence="1">Belongs to the ClpX chaperone family.</text>
</comment>
<feature type="chain" id="PRO_1000024686" description="ATP-dependent Clp protease ATP-binding subunit ClpX">
    <location>
        <begin position="1"/>
        <end position="408"/>
    </location>
</feature>
<feature type="domain" description="ClpX-type ZB" evidence="2">
    <location>
        <begin position="1"/>
        <end position="53"/>
    </location>
</feature>
<feature type="binding site" evidence="2">
    <location>
        <position position="12"/>
    </location>
    <ligand>
        <name>Zn(2+)</name>
        <dbReference type="ChEBI" id="CHEBI:29105"/>
    </ligand>
</feature>
<feature type="binding site" evidence="2">
    <location>
        <position position="15"/>
    </location>
    <ligand>
        <name>Zn(2+)</name>
        <dbReference type="ChEBI" id="CHEBI:29105"/>
    </ligand>
</feature>
<feature type="binding site" evidence="2">
    <location>
        <position position="34"/>
    </location>
    <ligand>
        <name>Zn(2+)</name>
        <dbReference type="ChEBI" id="CHEBI:29105"/>
    </ligand>
</feature>
<feature type="binding site" evidence="2">
    <location>
        <position position="37"/>
    </location>
    <ligand>
        <name>Zn(2+)</name>
        <dbReference type="ChEBI" id="CHEBI:29105"/>
    </ligand>
</feature>
<feature type="binding site" evidence="1">
    <location>
        <begin position="118"/>
        <end position="125"/>
    </location>
    <ligand>
        <name>ATP</name>
        <dbReference type="ChEBI" id="CHEBI:30616"/>
    </ligand>
</feature>
<evidence type="ECO:0000255" key="1">
    <source>
        <dbReference type="HAMAP-Rule" id="MF_00175"/>
    </source>
</evidence>
<evidence type="ECO:0000255" key="2">
    <source>
        <dbReference type="PROSITE-ProRule" id="PRU01250"/>
    </source>
</evidence>